<keyword id="KW-0963">Cytoplasm</keyword>
<keyword id="KW-0227">DNA damage</keyword>
<keyword id="KW-0233">DNA recombination</keyword>
<keyword id="KW-0234">DNA repair</keyword>
<keyword id="KW-0238">DNA-binding</keyword>
<dbReference type="EMBL" id="CP001068">
    <property type="protein sequence ID" value="ACD25535.1"/>
    <property type="molecule type" value="Genomic_DNA"/>
</dbReference>
<dbReference type="SMR" id="B2UFL2"/>
<dbReference type="STRING" id="402626.Rpic_0377"/>
<dbReference type="KEGG" id="rpi:Rpic_0377"/>
<dbReference type="eggNOG" id="COG0632">
    <property type="taxonomic scope" value="Bacteria"/>
</dbReference>
<dbReference type="HOGENOM" id="CLU_087936_0_0_4"/>
<dbReference type="GO" id="GO:0005737">
    <property type="term" value="C:cytoplasm"/>
    <property type="evidence" value="ECO:0007669"/>
    <property type="project" value="UniProtKB-SubCell"/>
</dbReference>
<dbReference type="GO" id="GO:0009379">
    <property type="term" value="C:Holliday junction helicase complex"/>
    <property type="evidence" value="ECO:0007669"/>
    <property type="project" value="InterPro"/>
</dbReference>
<dbReference type="GO" id="GO:0048476">
    <property type="term" value="C:Holliday junction resolvase complex"/>
    <property type="evidence" value="ECO:0007669"/>
    <property type="project" value="UniProtKB-UniRule"/>
</dbReference>
<dbReference type="GO" id="GO:0005524">
    <property type="term" value="F:ATP binding"/>
    <property type="evidence" value="ECO:0007669"/>
    <property type="project" value="InterPro"/>
</dbReference>
<dbReference type="GO" id="GO:0000400">
    <property type="term" value="F:four-way junction DNA binding"/>
    <property type="evidence" value="ECO:0007669"/>
    <property type="project" value="UniProtKB-UniRule"/>
</dbReference>
<dbReference type="GO" id="GO:0009378">
    <property type="term" value="F:four-way junction helicase activity"/>
    <property type="evidence" value="ECO:0007669"/>
    <property type="project" value="InterPro"/>
</dbReference>
<dbReference type="GO" id="GO:0006310">
    <property type="term" value="P:DNA recombination"/>
    <property type="evidence" value="ECO:0007669"/>
    <property type="project" value="UniProtKB-UniRule"/>
</dbReference>
<dbReference type="GO" id="GO:0006281">
    <property type="term" value="P:DNA repair"/>
    <property type="evidence" value="ECO:0007669"/>
    <property type="project" value="UniProtKB-UniRule"/>
</dbReference>
<dbReference type="CDD" id="cd14332">
    <property type="entry name" value="UBA_RuvA_C"/>
    <property type="match status" value="1"/>
</dbReference>
<dbReference type="Gene3D" id="1.10.150.20">
    <property type="entry name" value="5' to 3' exonuclease, C-terminal subdomain"/>
    <property type="match status" value="1"/>
</dbReference>
<dbReference type="Gene3D" id="1.10.8.10">
    <property type="entry name" value="DNA helicase RuvA subunit, C-terminal domain"/>
    <property type="match status" value="1"/>
</dbReference>
<dbReference type="Gene3D" id="2.40.50.140">
    <property type="entry name" value="Nucleic acid-binding proteins"/>
    <property type="match status" value="1"/>
</dbReference>
<dbReference type="HAMAP" id="MF_00031">
    <property type="entry name" value="DNA_HJ_migration_RuvA"/>
    <property type="match status" value="1"/>
</dbReference>
<dbReference type="InterPro" id="IPR013849">
    <property type="entry name" value="DNA_helicase_Holl-junc_RuvA_I"/>
</dbReference>
<dbReference type="InterPro" id="IPR003583">
    <property type="entry name" value="Hlx-hairpin-Hlx_DNA-bd_motif"/>
</dbReference>
<dbReference type="InterPro" id="IPR012340">
    <property type="entry name" value="NA-bd_OB-fold"/>
</dbReference>
<dbReference type="InterPro" id="IPR000085">
    <property type="entry name" value="RuvA"/>
</dbReference>
<dbReference type="InterPro" id="IPR010994">
    <property type="entry name" value="RuvA_2-like"/>
</dbReference>
<dbReference type="InterPro" id="IPR011114">
    <property type="entry name" value="RuvA_C"/>
</dbReference>
<dbReference type="InterPro" id="IPR036267">
    <property type="entry name" value="RuvA_C_sf"/>
</dbReference>
<dbReference type="NCBIfam" id="TIGR00084">
    <property type="entry name" value="ruvA"/>
    <property type="match status" value="1"/>
</dbReference>
<dbReference type="Pfam" id="PF14520">
    <property type="entry name" value="HHH_5"/>
    <property type="match status" value="1"/>
</dbReference>
<dbReference type="Pfam" id="PF07499">
    <property type="entry name" value="RuvA_C"/>
    <property type="match status" value="1"/>
</dbReference>
<dbReference type="Pfam" id="PF01330">
    <property type="entry name" value="RuvA_N"/>
    <property type="match status" value="1"/>
</dbReference>
<dbReference type="SMART" id="SM00278">
    <property type="entry name" value="HhH1"/>
    <property type="match status" value="2"/>
</dbReference>
<dbReference type="SUPFAM" id="SSF46929">
    <property type="entry name" value="DNA helicase RuvA subunit, C-terminal domain"/>
    <property type="match status" value="1"/>
</dbReference>
<dbReference type="SUPFAM" id="SSF50249">
    <property type="entry name" value="Nucleic acid-binding proteins"/>
    <property type="match status" value="1"/>
</dbReference>
<dbReference type="SUPFAM" id="SSF47781">
    <property type="entry name" value="RuvA domain 2-like"/>
    <property type="match status" value="1"/>
</dbReference>
<feature type="chain" id="PRO_1000090356" description="Holliday junction branch migration complex subunit RuvA">
    <location>
        <begin position="1"/>
        <end position="193"/>
    </location>
</feature>
<feature type="region of interest" description="Domain I" evidence="1">
    <location>
        <begin position="1"/>
        <end position="64"/>
    </location>
</feature>
<feature type="region of interest" description="Domain II" evidence="1">
    <location>
        <begin position="65"/>
        <end position="143"/>
    </location>
</feature>
<feature type="region of interest" description="Flexible linker" evidence="1">
    <location>
        <begin position="144"/>
        <end position="151"/>
    </location>
</feature>
<feature type="region of interest" description="Domain III" evidence="1">
    <location>
        <begin position="151"/>
        <end position="193"/>
    </location>
</feature>
<protein>
    <recommendedName>
        <fullName evidence="1">Holliday junction branch migration complex subunit RuvA</fullName>
    </recommendedName>
</protein>
<comment type="function">
    <text evidence="1">The RuvA-RuvB-RuvC complex processes Holliday junction (HJ) DNA during genetic recombination and DNA repair, while the RuvA-RuvB complex plays an important role in the rescue of blocked DNA replication forks via replication fork reversal (RFR). RuvA specifically binds to HJ cruciform DNA, conferring on it an open structure. The RuvB hexamer acts as an ATP-dependent pump, pulling dsDNA into and through the RuvAB complex. HJ branch migration allows RuvC to scan DNA until it finds its consensus sequence, where it cleaves and resolves the cruciform DNA.</text>
</comment>
<comment type="subunit">
    <text evidence="1">Homotetramer. Forms an RuvA(8)-RuvB(12)-Holliday junction (HJ) complex. HJ DNA is sandwiched between 2 RuvA tetramers; dsDNA enters through RuvA and exits via RuvB. An RuvB hexamer assembles on each DNA strand where it exits the tetramer. Each RuvB hexamer is contacted by two RuvA subunits (via domain III) on 2 adjacent RuvB subunits; this complex drives branch migration. In the full resolvosome a probable DNA-RuvA(4)-RuvB(12)-RuvC(2) complex forms which resolves the HJ.</text>
</comment>
<comment type="subcellular location">
    <subcellularLocation>
        <location evidence="1">Cytoplasm</location>
    </subcellularLocation>
</comment>
<comment type="domain">
    <text evidence="1">Has three domains with a flexible linker between the domains II and III and assumes an 'L' shape. Domain III is highly mobile and contacts RuvB.</text>
</comment>
<comment type="similarity">
    <text evidence="1">Belongs to the RuvA family.</text>
</comment>
<name>RUVA_RALPJ</name>
<sequence>MIGRIAGTLIEKNPPHLLVDCHGVGYEIDVPMSTFYNLPATGEKVVLLTQQIVREDAHLLYGFGTAAERETFRQLIKISGIGARIALAVLSGMSVAELAQAVTLQEAGRLTRIPGIGKKTAERLLLELKGKLGADLGTVPGGPAVSDDAVDVLNALLALGYSDKEAALAIKQVPAGTGVSEGIKLALKALSKG</sequence>
<gene>
    <name evidence="1" type="primary">ruvA</name>
    <name type="ordered locus">Rpic_0377</name>
</gene>
<proteinExistence type="inferred from homology"/>
<reference key="1">
    <citation type="submission" date="2008-05" db="EMBL/GenBank/DDBJ databases">
        <title>Complete sequence of chromosome 1 of Ralstonia pickettii 12J.</title>
        <authorList>
            <person name="Lucas S."/>
            <person name="Copeland A."/>
            <person name="Lapidus A."/>
            <person name="Glavina del Rio T."/>
            <person name="Dalin E."/>
            <person name="Tice H."/>
            <person name="Bruce D."/>
            <person name="Goodwin L."/>
            <person name="Pitluck S."/>
            <person name="Meincke L."/>
            <person name="Brettin T."/>
            <person name="Detter J.C."/>
            <person name="Han C."/>
            <person name="Kuske C.R."/>
            <person name="Schmutz J."/>
            <person name="Larimer F."/>
            <person name="Land M."/>
            <person name="Hauser L."/>
            <person name="Kyrpides N."/>
            <person name="Mikhailova N."/>
            <person name="Marsh T."/>
            <person name="Richardson P."/>
        </authorList>
    </citation>
    <scope>NUCLEOTIDE SEQUENCE [LARGE SCALE GENOMIC DNA]</scope>
    <source>
        <strain>12J</strain>
    </source>
</reference>
<evidence type="ECO:0000255" key="1">
    <source>
        <dbReference type="HAMAP-Rule" id="MF_00031"/>
    </source>
</evidence>
<organism>
    <name type="scientific">Ralstonia pickettii (strain 12J)</name>
    <dbReference type="NCBI Taxonomy" id="402626"/>
    <lineage>
        <taxon>Bacteria</taxon>
        <taxon>Pseudomonadati</taxon>
        <taxon>Pseudomonadota</taxon>
        <taxon>Betaproteobacteria</taxon>
        <taxon>Burkholderiales</taxon>
        <taxon>Burkholderiaceae</taxon>
        <taxon>Ralstonia</taxon>
    </lineage>
</organism>
<accession>B2UFL2</accession>